<reference key="1">
    <citation type="submission" date="2008-04" db="EMBL/GenBank/DDBJ databases">
        <title>Complete sequence of Yersinia pseudotuberculosis PB1/+.</title>
        <authorList>
            <person name="Copeland A."/>
            <person name="Lucas S."/>
            <person name="Lapidus A."/>
            <person name="Glavina del Rio T."/>
            <person name="Dalin E."/>
            <person name="Tice H."/>
            <person name="Bruce D."/>
            <person name="Goodwin L."/>
            <person name="Pitluck S."/>
            <person name="Munk A.C."/>
            <person name="Brettin T."/>
            <person name="Detter J.C."/>
            <person name="Han C."/>
            <person name="Tapia R."/>
            <person name="Schmutz J."/>
            <person name="Larimer F."/>
            <person name="Land M."/>
            <person name="Hauser L."/>
            <person name="Challacombe J.F."/>
            <person name="Green L."/>
            <person name="Lindler L.E."/>
            <person name="Nikolich M.P."/>
            <person name="Richardson P."/>
        </authorList>
    </citation>
    <scope>NUCLEOTIDE SEQUENCE [LARGE SCALE GENOMIC DNA]</scope>
    <source>
        <strain>PB1/+</strain>
    </source>
</reference>
<comment type="function">
    <text evidence="1">Catalyzes the desulfonation of aliphatic sulfonates.</text>
</comment>
<comment type="catalytic activity">
    <reaction evidence="1">
        <text>an alkanesulfonate + FMNH2 + O2 = an aldehyde + FMN + sulfite + H2O + 2 H(+)</text>
        <dbReference type="Rhea" id="RHEA:23064"/>
        <dbReference type="ChEBI" id="CHEBI:15377"/>
        <dbReference type="ChEBI" id="CHEBI:15378"/>
        <dbReference type="ChEBI" id="CHEBI:15379"/>
        <dbReference type="ChEBI" id="CHEBI:17359"/>
        <dbReference type="ChEBI" id="CHEBI:17478"/>
        <dbReference type="ChEBI" id="CHEBI:57618"/>
        <dbReference type="ChEBI" id="CHEBI:58210"/>
        <dbReference type="ChEBI" id="CHEBI:134249"/>
        <dbReference type="EC" id="1.14.14.5"/>
    </reaction>
</comment>
<comment type="subunit">
    <text evidence="1">Homotetramer.</text>
</comment>
<comment type="miscellaneous">
    <text evidence="1">FMNH(2) which is absolutely required for this enzymatic reaction, is provided by SsuE.</text>
</comment>
<comment type="similarity">
    <text evidence="1">Belongs to the SsuD family.</text>
</comment>
<protein>
    <recommendedName>
        <fullName evidence="1">Alkanesulfonate monooxygenase</fullName>
        <ecNumber evidence="1">1.14.14.5</ecNumber>
    </recommendedName>
    <alternativeName>
        <fullName evidence="1">FMNH2-dependent aliphatic sulfonate monooxygenase</fullName>
    </alternativeName>
</protein>
<feature type="chain" id="PRO_1000139629" description="Alkanesulfonate monooxygenase">
    <location>
        <begin position="1"/>
        <end position="382"/>
    </location>
</feature>
<proteinExistence type="inferred from homology"/>
<organism>
    <name type="scientific">Yersinia pseudotuberculosis serotype IB (strain PB1/+)</name>
    <dbReference type="NCBI Taxonomy" id="502801"/>
    <lineage>
        <taxon>Bacteria</taxon>
        <taxon>Pseudomonadati</taxon>
        <taxon>Pseudomonadota</taxon>
        <taxon>Gammaproteobacteria</taxon>
        <taxon>Enterobacterales</taxon>
        <taxon>Yersiniaceae</taxon>
        <taxon>Yersinia</taxon>
    </lineage>
</organism>
<sequence>MSINVFWFLPTHGDGHYLGSSEGARAVDYSYLQQIAQAADRLGFGGVLIPTGRSCEDSWLVAASLIPVTQRLKFLVALRPGIISPTLAARQAATLDRLSNGRALFNLVTGGDPEELAAEGLHLNHTERYEASAEFTHVWRKVLEGETVDFAGKHIQVKGAKLLFPPVQHPRPPLYFGGSSAAAQDLAAEQVELYLTWGETPEQVKEKIEEVRAKAAAKGRTVRFGIRLHVIVRETTEEAWRAANRLIANLDDKTIADAQQAFARFDSVGQQRMAALHGGKKDNLEISPNLWAGVGLVRGGAGTALVGDGPTVAQRIQEYADLGIDTFVFSGYPHLEEAYRVSELLFPHLDLATTELPTQRPATQPQGEVVANIYVPQKVSQS</sequence>
<dbReference type="EC" id="1.14.14.5" evidence="1"/>
<dbReference type="EMBL" id="CP001048">
    <property type="protein sequence ID" value="ACC90747.1"/>
    <property type="molecule type" value="Genomic_DNA"/>
</dbReference>
<dbReference type="RefSeq" id="WP_011193183.1">
    <property type="nucleotide sequence ID" value="NZ_CP009780.1"/>
</dbReference>
<dbReference type="SMR" id="B2K4U5"/>
<dbReference type="GeneID" id="49784406"/>
<dbReference type="KEGG" id="ypb:YPTS_3794"/>
<dbReference type="PATRIC" id="fig|502801.10.peg.3259"/>
<dbReference type="GO" id="GO:0008726">
    <property type="term" value="F:alkanesulfonate monooxygenase activity"/>
    <property type="evidence" value="ECO:0007669"/>
    <property type="project" value="UniProtKB-UniRule"/>
</dbReference>
<dbReference type="GO" id="GO:0046306">
    <property type="term" value="P:alkanesulfonate catabolic process"/>
    <property type="evidence" value="ECO:0007669"/>
    <property type="project" value="TreeGrafter"/>
</dbReference>
<dbReference type="CDD" id="cd01094">
    <property type="entry name" value="Alkanesulfonate_monoxygenase"/>
    <property type="match status" value="1"/>
</dbReference>
<dbReference type="FunFam" id="3.20.20.30:FF:000001">
    <property type="entry name" value="Alkanesulfonate monooxygenase"/>
    <property type="match status" value="1"/>
</dbReference>
<dbReference type="Gene3D" id="3.20.20.30">
    <property type="entry name" value="Luciferase-like domain"/>
    <property type="match status" value="1"/>
</dbReference>
<dbReference type="HAMAP" id="MF_01229">
    <property type="entry name" value="Alkanesulf_monooxygen"/>
    <property type="match status" value="1"/>
</dbReference>
<dbReference type="InterPro" id="IPR019911">
    <property type="entry name" value="Alkanesulphonate_mOase_FMN-dep"/>
</dbReference>
<dbReference type="InterPro" id="IPR011251">
    <property type="entry name" value="Luciferase-like_dom"/>
</dbReference>
<dbReference type="InterPro" id="IPR036661">
    <property type="entry name" value="Luciferase-like_sf"/>
</dbReference>
<dbReference type="InterPro" id="IPR050172">
    <property type="entry name" value="SsuD_RutA_monooxygenase"/>
</dbReference>
<dbReference type="NCBIfam" id="TIGR03565">
    <property type="entry name" value="alk_sulf_monoox"/>
    <property type="match status" value="1"/>
</dbReference>
<dbReference type="NCBIfam" id="NF001939">
    <property type="entry name" value="PRK00719.1"/>
    <property type="match status" value="1"/>
</dbReference>
<dbReference type="PANTHER" id="PTHR42847">
    <property type="entry name" value="ALKANESULFONATE MONOOXYGENASE"/>
    <property type="match status" value="1"/>
</dbReference>
<dbReference type="PANTHER" id="PTHR42847:SF4">
    <property type="entry name" value="ALKANESULFONATE MONOOXYGENASE-RELATED"/>
    <property type="match status" value="1"/>
</dbReference>
<dbReference type="Pfam" id="PF00296">
    <property type="entry name" value="Bac_luciferase"/>
    <property type="match status" value="1"/>
</dbReference>
<dbReference type="SUPFAM" id="SSF51679">
    <property type="entry name" value="Bacterial luciferase-like"/>
    <property type="match status" value="1"/>
</dbReference>
<evidence type="ECO:0000255" key="1">
    <source>
        <dbReference type="HAMAP-Rule" id="MF_01229"/>
    </source>
</evidence>
<accession>B2K4U5</accession>
<name>SSUD_YERPB</name>
<gene>
    <name evidence="1" type="primary">ssuD</name>
    <name type="ordered locus">YPTS_3794</name>
</gene>
<keyword id="KW-0285">Flavoprotein</keyword>
<keyword id="KW-0288">FMN</keyword>
<keyword id="KW-0503">Monooxygenase</keyword>
<keyword id="KW-0560">Oxidoreductase</keyword>